<organism>
    <name type="scientific">Rattus norvegicus</name>
    <name type="common">Rat</name>
    <dbReference type="NCBI Taxonomy" id="10116"/>
    <lineage>
        <taxon>Eukaryota</taxon>
        <taxon>Metazoa</taxon>
        <taxon>Chordata</taxon>
        <taxon>Craniata</taxon>
        <taxon>Vertebrata</taxon>
        <taxon>Euteleostomi</taxon>
        <taxon>Mammalia</taxon>
        <taxon>Eutheria</taxon>
        <taxon>Euarchontoglires</taxon>
        <taxon>Glires</taxon>
        <taxon>Rodentia</taxon>
        <taxon>Myomorpha</taxon>
        <taxon>Muroidea</taxon>
        <taxon>Muridae</taxon>
        <taxon>Murinae</taxon>
        <taxon>Rattus</taxon>
    </lineage>
</organism>
<sequence>MAGRTQGKHRPRVRTCPSLVPFDNPCWPPSHQPLPLQVGAPGHRVTSFLSGRAWPSYIPKGKHGLPGPRYVPDPWSLGVLGHVAPLRVTTTIFLPGASPGVMLDPACQKTDHFLSCYPWFHGPISRVRAAQLVQLQGPDAHGVFLVRQSESRRGEYVLTFNLQGRAKHLRLVLTERGQCRVQHLHFPSVVDMLRHFQRSPIPLECGAACDVRLSGYVVVVSQAPGRKPKVVSRGGVTASTARTKLPSWLRLLHGVIHVISPGSSNTVLFPFSLPHWDSELGHPHLSSAGCPPGHGAEALRGQVTPPEQIFHLVPSPEELANSLRQLELESVSSARDSDYEMDSSSRSHLRAIDNQYTPLSQLCREANL</sequence>
<evidence type="ECO:0000255" key="1"/>
<evidence type="ECO:0000255" key="2">
    <source>
        <dbReference type="PROSITE-ProRule" id="PRU00191"/>
    </source>
</evidence>
<evidence type="ECO:0000303" key="3">
    <source>
    </source>
</evidence>
<evidence type="ECO:0000305" key="4"/>
<protein>
    <recommendedName>
        <fullName>SH2B adapter protein 3</fullName>
    </recommendedName>
    <alternativeName>
        <fullName>Lymphocyte adapter protein</fullName>
    </alternativeName>
    <alternativeName>
        <fullName>Lymphocyte-specific adapter protein Lnk</fullName>
    </alternativeName>
    <alternativeName>
        <fullName>Signal transduction protein Lnk</fullName>
    </alternativeName>
</protein>
<dbReference type="EMBL" id="U24655">
    <property type="protein sequence ID" value="AAC52351.1"/>
    <property type="molecule type" value="mRNA"/>
</dbReference>
<dbReference type="EMBL" id="U24654">
    <property type="protein sequence ID" value="AAC52350.1"/>
    <property type="molecule type" value="mRNA"/>
</dbReference>
<dbReference type="EMBL" id="U24653">
    <property type="protein sequence ID" value="AAC52349.1"/>
    <property type="molecule type" value="mRNA"/>
</dbReference>
<dbReference type="EMBL" id="U24652">
    <property type="protein sequence ID" value="AAC52348.1"/>
    <property type="molecule type" value="mRNA"/>
</dbReference>
<dbReference type="RefSeq" id="NP_113809.1">
    <property type="nucleotide sequence ID" value="NM_031621.1"/>
</dbReference>
<dbReference type="RefSeq" id="XP_063127675.1">
    <molecule id="P50745-3"/>
    <property type="nucleotide sequence ID" value="XM_063271605.1"/>
</dbReference>
<dbReference type="PDB" id="8CZ9">
    <property type="method" value="X-ray"/>
    <property type="resolution" value="1.65 A"/>
    <property type="chains" value="A=111-220"/>
</dbReference>
<dbReference type="PDBsum" id="8CZ9"/>
<dbReference type="SMR" id="P50745"/>
<dbReference type="BioGRID" id="248640">
    <property type="interactions" value="2"/>
</dbReference>
<dbReference type="FunCoup" id="P50745">
    <property type="interactions" value="8"/>
</dbReference>
<dbReference type="STRING" id="10116.ENSRNOP00000038125"/>
<dbReference type="PhosphoSitePlus" id="P50745"/>
<dbReference type="PaxDb" id="10116-ENSRNOP00000066850"/>
<dbReference type="UCSC" id="RGD:68411">
    <molecule id="P50745-1"/>
    <property type="organism name" value="rat"/>
</dbReference>
<dbReference type="AGR" id="RGD:68411"/>
<dbReference type="RGD" id="68411">
    <property type="gene designation" value="Sh2b3"/>
</dbReference>
<dbReference type="eggNOG" id="ENOG502QS89">
    <property type="taxonomic scope" value="Eukaryota"/>
</dbReference>
<dbReference type="HOGENOM" id="CLU_014885_3_0_1"/>
<dbReference type="InParanoid" id="P50745"/>
<dbReference type="PhylomeDB" id="P50745"/>
<dbReference type="PRO" id="PR:P50745"/>
<dbReference type="Proteomes" id="UP000002494">
    <property type="component" value="Unplaced"/>
</dbReference>
<dbReference type="GO" id="GO:0042301">
    <property type="term" value="F:phosphate ion binding"/>
    <property type="evidence" value="ECO:0000314"/>
    <property type="project" value="RGD"/>
</dbReference>
<dbReference type="GO" id="GO:1990782">
    <property type="term" value="F:protein tyrosine kinase binding"/>
    <property type="evidence" value="ECO:0000266"/>
    <property type="project" value="RGD"/>
</dbReference>
<dbReference type="GO" id="GO:0044877">
    <property type="term" value="F:protein-containing complex binding"/>
    <property type="evidence" value="ECO:0000314"/>
    <property type="project" value="RGD"/>
</dbReference>
<dbReference type="GO" id="GO:0030159">
    <property type="term" value="F:signaling receptor complex adaptor activity"/>
    <property type="evidence" value="ECO:0000266"/>
    <property type="project" value="RGD"/>
</dbReference>
<dbReference type="GO" id="GO:0005173">
    <property type="term" value="F:stem cell factor receptor binding"/>
    <property type="evidence" value="ECO:0000266"/>
    <property type="project" value="RGD"/>
</dbReference>
<dbReference type="GO" id="GO:1990869">
    <property type="term" value="P:cellular response to chemokine"/>
    <property type="evidence" value="ECO:0000266"/>
    <property type="project" value="RGD"/>
</dbReference>
<dbReference type="GO" id="GO:0036016">
    <property type="term" value="P:cellular response to interleukin-3"/>
    <property type="evidence" value="ECO:0000266"/>
    <property type="project" value="RGD"/>
</dbReference>
<dbReference type="GO" id="GO:0035162">
    <property type="term" value="P:embryonic hemopoiesis"/>
    <property type="evidence" value="ECO:0000266"/>
    <property type="project" value="RGD"/>
</dbReference>
<dbReference type="GO" id="GO:0048821">
    <property type="term" value="P:erythrocyte development"/>
    <property type="evidence" value="ECO:0000266"/>
    <property type="project" value="RGD"/>
</dbReference>
<dbReference type="GO" id="GO:0060218">
    <property type="term" value="P:hematopoietic stem cell differentiation"/>
    <property type="evidence" value="ECO:0000266"/>
    <property type="project" value="RGD"/>
</dbReference>
<dbReference type="GO" id="GO:0030097">
    <property type="term" value="P:hemopoiesis"/>
    <property type="evidence" value="ECO:0000266"/>
    <property type="project" value="RGD"/>
</dbReference>
<dbReference type="GO" id="GO:0035556">
    <property type="term" value="P:intracellular signal transduction"/>
    <property type="evidence" value="ECO:0000266"/>
    <property type="project" value="RGD"/>
</dbReference>
<dbReference type="GO" id="GO:0035855">
    <property type="term" value="P:megakaryocyte development"/>
    <property type="evidence" value="ECO:0000266"/>
    <property type="project" value="RGD"/>
</dbReference>
<dbReference type="GO" id="GO:0035702">
    <property type="term" value="P:monocyte homeostasis"/>
    <property type="evidence" value="ECO:0000266"/>
    <property type="project" value="RGD"/>
</dbReference>
<dbReference type="GO" id="GO:0008285">
    <property type="term" value="P:negative regulation of cell population proliferation"/>
    <property type="evidence" value="ECO:0000266"/>
    <property type="project" value="RGD"/>
</dbReference>
<dbReference type="GO" id="GO:0070100">
    <property type="term" value="P:negative regulation of chemokine-mediated signaling pathway"/>
    <property type="evidence" value="ECO:0000266"/>
    <property type="project" value="RGD"/>
</dbReference>
<dbReference type="GO" id="GO:1900235">
    <property type="term" value="P:negative regulation of Kit signaling pathway"/>
    <property type="evidence" value="ECO:0000266"/>
    <property type="project" value="RGD"/>
</dbReference>
<dbReference type="GO" id="GO:0043409">
    <property type="term" value="P:negative regulation of MAPK cascade"/>
    <property type="evidence" value="ECO:0000266"/>
    <property type="project" value="RGD"/>
</dbReference>
<dbReference type="GO" id="GO:0051898">
    <property type="term" value="P:negative regulation of phosphatidylinositol 3-kinase/protein kinase B signal transduction"/>
    <property type="evidence" value="ECO:0000266"/>
    <property type="project" value="RGD"/>
</dbReference>
<dbReference type="GO" id="GO:0090331">
    <property type="term" value="P:negative regulation of platelet aggregation"/>
    <property type="evidence" value="ECO:0000266"/>
    <property type="project" value="RGD"/>
</dbReference>
<dbReference type="GO" id="GO:0046426">
    <property type="term" value="P:negative regulation of receptor signaling pathway via JAK-STAT"/>
    <property type="evidence" value="ECO:0000266"/>
    <property type="project" value="RGD"/>
</dbReference>
<dbReference type="GO" id="GO:1904893">
    <property type="term" value="P:negative regulation of receptor signaling pathway via STAT"/>
    <property type="evidence" value="ECO:0000266"/>
    <property type="project" value="RGD"/>
</dbReference>
<dbReference type="GO" id="GO:0060761">
    <property type="term" value="P:negative regulation of response to cytokine stimulus"/>
    <property type="evidence" value="ECO:0000266"/>
    <property type="project" value="RGD"/>
</dbReference>
<dbReference type="GO" id="GO:1903671">
    <property type="term" value="P:negative regulation of sprouting angiogenesis"/>
    <property type="evidence" value="ECO:0000315"/>
    <property type="project" value="RGD"/>
</dbReference>
<dbReference type="GO" id="GO:0001780">
    <property type="term" value="P:neutrophil homeostasis"/>
    <property type="evidence" value="ECO:0000266"/>
    <property type="project" value="RGD"/>
</dbReference>
<dbReference type="GO" id="GO:0045589">
    <property type="term" value="P:regulation of regulatory T cell differentiation"/>
    <property type="evidence" value="ECO:0000315"/>
    <property type="project" value="RGD"/>
</dbReference>
<dbReference type="GO" id="GO:0038163">
    <property type="term" value="P:thrombopoietin-mediated signaling pathway"/>
    <property type="evidence" value="ECO:0000266"/>
    <property type="project" value="RGD"/>
</dbReference>
<dbReference type="CDD" id="cd10412">
    <property type="entry name" value="SH2_SH2B3"/>
    <property type="match status" value="1"/>
</dbReference>
<dbReference type="FunFam" id="3.30.505.10:FF:000008">
    <property type="entry name" value="SH2B adapter protein 1 isoform 2"/>
    <property type="match status" value="1"/>
</dbReference>
<dbReference type="Gene3D" id="3.30.505.10">
    <property type="entry name" value="SH2 domain"/>
    <property type="match status" value="1"/>
</dbReference>
<dbReference type="InterPro" id="IPR000980">
    <property type="entry name" value="SH2"/>
</dbReference>
<dbReference type="InterPro" id="IPR036860">
    <property type="entry name" value="SH2_dom_sf"/>
</dbReference>
<dbReference type="InterPro" id="IPR030523">
    <property type="entry name" value="SH2B"/>
</dbReference>
<dbReference type="InterPro" id="IPR035059">
    <property type="entry name" value="SH2B3_SH2"/>
</dbReference>
<dbReference type="PANTHER" id="PTHR10872">
    <property type="entry name" value="SH2B ADAPTER PROTEIN"/>
    <property type="match status" value="1"/>
</dbReference>
<dbReference type="PANTHER" id="PTHR10872:SF1">
    <property type="entry name" value="SH2B ADAPTER PROTEIN 3"/>
    <property type="match status" value="1"/>
</dbReference>
<dbReference type="Pfam" id="PF00017">
    <property type="entry name" value="SH2"/>
    <property type="match status" value="1"/>
</dbReference>
<dbReference type="PRINTS" id="PR00401">
    <property type="entry name" value="SH2DOMAIN"/>
</dbReference>
<dbReference type="SMART" id="SM00252">
    <property type="entry name" value="SH2"/>
    <property type="match status" value="1"/>
</dbReference>
<dbReference type="SUPFAM" id="SSF55550">
    <property type="entry name" value="SH2 domain"/>
    <property type="match status" value="1"/>
</dbReference>
<dbReference type="PROSITE" id="PS50001">
    <property type="entry name" value="SH2"/>
    <property type="match status" value="1"/>
</dbReference>
<gene>
    <name type="primary">Sh2b3</name>
    <name type="synonym">Lnk</name>
</gene>
<keyword id="KW-0002">3D-structure</keyword>
<keyword id="KW-0025">Alternative splicing</keyword>
<keyword id="KW-0597">Phosphoprotein</keyword>
<keyword id="KW-1185">Reference proteome</keyword>
<keyword id="KW-0727">SH2 domain</keyword>
<proteinExistence type="evidence at protein level"/>
<reference key="1">
    <citation type="journal article" date="1995" name="Proc. Natl. Acad. Sci. U.S.A.">
        <title>Cloning and characterization of Lnk, a signal transduction protein that links T-cell receptor activation signal to phospholipase C gamma 1, Grb2, and phosphatidylinositol 3-kinase.</title>
        <authorList>
            <person name="Huang X."/>
            <person name="Li Y."/>
            <person name="Tanaka K."/>
            <person name="Moore K.G."/>
            <person name="Hayashi J."/>
        </authorList>
    </citation>
    <scope>NUCLEOTIDE SEQUENCE [MRNA] (ISOFORMS LNK1; LNK2; LNK3 AND LNK4)</scope>
    <source>
        <strain>Fischer</strain>
        <tissue>Lymph node</tissue>
    </source>
</reference>
<accession>P50745</accession>
<name>SH2B3_RAT</name>
<feature type="chain" id="PRO_0000084456" description="SH2B adapter protein 3">
    <location>
        <begin position="1"/>
        <end position="368"/>
    </location>
</feature>
<feature type="domain" description="SH2" evidence="2">
    <location>
        <begin position="119"/>
        <end position="217"/>
    </location>
</feature>
<feature type="modified residue" description="Phosphotyrosine" evidence="1">
    <location>
        <position position="356"/>
    </location>
</feature>
<feature type="splice variant" id="VSP_004308" description="In isoform Lnk2." evidence="3">
    <original>MAGRTQGKHRPRVRTCPSLVPFDNPCWPPSHQPLPLQVGAPGHRVTSFLSGRAWPSYIPKGKHGLPGPRYVPDPWSLGVLGHVAPLRVTTTIFLP</original>
    <variation>MPDNLYTFVLKVQGQTDIIFEVGDEQQLNSWLAELRASTGLGLEHLDTELPLSLVAEPGPAISPRGSTDSLDQ</variation>
    <location>
        <begin position="1"/>
        <end position="95"/>
    </location>
</feature>
<feature type="splice variant" id="VSP_004309" description="In isoform Lnk3." evidence="3">
    <location>
        <begin position="14"/>
        <end position="38"/>
    </location>
</feature>
<feature type="splice variant" id="VSP_004310" description="In isoform Lnk1." evidence="3">
    <location>
        <begin position="225"/>
        <end position="278"/>
    </location>
</feature>
<feature type="splice variant" id="VSP_004311" description="In isoform Lnk2 and isoform Lnk3." evidence="3">
    <location>
        <begin position="226"/>
        <end position="262"/>
    </location>
</feature>
<comment type="function">
    <text>Links T-cell receptor activation signal to phospholipase C-gamma-1, GRB2 and phosphatidylinositol 3-kinase.</text>
</comment>
<comment type="alternative products">
    <event type="alternative splicing"/>
    <isoform>
        <id>P50745-1</id>
        <name>Lnk4</name>
        <sequence type="displayed"/>
    </isoform>
    <isoform>
        <id>P50745-2</id>
        <name>Lnk1</name>
        <sequence type="described" ref="VSP_004310"/>
    </isoform>
    <isoform>
        <id>P50745-3</id>
        <name>Lnk2</name>
        <sequence type="described" ref="VSP_004308 VSP_004311"/>
    </isoform>
    <isoform>
        <id>P50745-4</id>
        <name>Lnk3</name>
        <sequence type="described" ref="VSP_004309 VSP_004311"/>
    </isoform>
</comment>
<comment type="tissue specificity">
    <text>Preferentially expressed by lymphocytes in lymph node and spleen.</text>
</comment>
<comment type="PTM">
    <text>Tyrosine-phosphorylated upon T-cell activation. The tyrosine phosphorylation site is multifunctional and may associate with the SH2 domains of phospholipase C-gamma-1, GRB-2, and PI3-K upon T-cell receptor activation.</text>
</comment>
<comment type="similarity">
    <text evidence="4">Belongs to the SH2B adapter family.</text>
</comment>